<gene>
    <name evidence="1" type="primary">nadD</name>
    <name type="ordered locus">TWT_469</name>
</gene>
<feature type="chain" id="PRO_0000181464" description="Probable nicotinate-nucleotide adenylyltransferase">
    <location>
        <begin position="1"/>
        <end position="186"/>
    </location>
</feature>
<dbReference type="EC" id="2.7.7.18" evidence="1"/>
<dbReference type="EMBL" id="AE014184">
    <property type="protein sequence ID" value="AAO44566.1"/>
    <property type="status" value="ALT_INIT"/>
    <property type="molecule type" value="Genomic_DNA"/>
</dbReference>
<dbReference type="SMR" id="Q83G58"/>
<dbReference type="STRING" id="203267.TWT_469"/>
<dbReference type="KEGG" id="twh:TWT_469"/>
<dbReference type="eggNOG" id="COG1057">
    <property type="taxonomic scope" value="Bacteria"/>
</dbReference>
<dbReference type="HOGENOM" id="CLU_069765_1_1_11"/>
<dbReference type="UniPathway" id="UPA00253">
    <property type="reaction ID" value="UER00332"/>
</dbReference>
<dbReference type="Proteomes" id="UP000002200">
    <property type="component" value="Chromosome"/>
</dbReference>
<dbReference type="GO" id="GO:0005524">
    <property type="term" value="F:ATP binding"/>
    <property type="evidence" value="ECO:0007669"/>
    <property type="project" value="UniProtKB-KW"/>
</dbReference>
<dbReference type="GO" id="GO:0004515">
    <property type="term" value="F:nicotinate-nucleotide adenylyltransferase activity"/>
    <property type="evidence" value="ECO:0007669"/>
    <property type="project" value="UniProtKB-UniRule"/>
</dbReference>
<dbReference type="GO" id="GO:0009435">
    <property type="term" value="P:NAD biosynthetic process"/>
    <property type="evidence" value="ECO:0007669"/>
    <property type="project" value="UniProtKB-UniRule"/>
</dbReference>
<dbReference type="CDD" id="cd02165">
    <property type="entry name" value="NMNAT"/>
    <property type="match status" value="1"/>
</dbReference>
<dbReference type="FunFam" id="3.40.50.620:FF:000039">
    <property type="entry name" value="Probable nicotinate-nucleotide adenylyltransferase"/>
    <property type="match status" value="1"/>
</dbReference>
<dbReference type="Gene3D" id="3.40.50.620">
    <property type="entry name" value="HUPs"/>
    <property type="match status" value="1"/>
</dbReference>
<dbReference type="HAMAP" id="MF_00244">
    <property type="entry name" value="NaMN_adenylyltr"/>
    <property type="match status" value="1"/>
</dbReference>
<dbReference type="InterPro" id="IPR004821">
    <property type="entry name" value="Cyt_trans-like"/>
</dbReference>
<dbReference type="InterPro" id="IPR005248">
    <property type="entry name" value="NadD/NMNAT"/>
</dbReference>
<dbReference type="InterPro" id="IPR014729">
    <property type="entry name" value="Rossmann-like_a/b/a_fold"/>
</dbReference>
<dbReference type="NCBIfam" id="TIGR00125">
    <property type="entry name" value="cyt_tran_rel"/>
    <property type="match status" value="1"/>
</dbReference>
<dbReference type="NCBIfam" id="TIGR00482">
    <property type="entry name" value="nicotinate (nicotinamide) nucleotide adenylyltransferase"/>
    <property type="match status" value="1"/>
</dbReference>
<dbReference type="NCBIfam" id="NF000840">
    <property type="entry name" value="PRK00071.1-3"/>
    <property type="match status" value="1"/>
</dbReference>
<dbReference type="PANTHER" id="PTHR39321">
    <property type="entry name" value="NICOTINATE-NUCLEOTIDE ADENYLYLTRANSFERASE-RELATED"/>
    <property type="match status" value="1"/>
</dbReference>
<dbReference type="PANTHER" id="PTHR39321:SF3">
    <property type="entry name" value="PHOSPHOPANTETHEINE ADENYLYLTRANSFERASE"/>
    <property type="match status" value="1"/>
</dbReference>
<dbReference type="Pfam" id="PF01467">
    <property type="entry name" value="CTP_transf_like"/>
    <property type="match status" value="1"/>
</dbReference>
<dbReference type="SUPFAM" id="SSF52374">
    <property type="entry name" value="Nucleotidylyl transferase"/>
    <property type="match status" value="1"/>
</dbReference>
<evidence type="ECO:0000255" key="1">
    <source>
        <dbReference type="HAMAP-Rule" id="MF_00244"/>
    </source>
</evidence>
<evidence type="ECO:0000305" key="2"/>
<accession>Q83G58</accession>
<sequence length="186" mass="20907">MGGTFDPIHHGHLVVASEVASRFCLDEVIFVPTGRPPHKKEVSDPWHRYLMAVIATASNQRFSVSKIDIERTGPTFTVDTLRELREQLPSSDLFFITGTDALARIFSWKDADTLWSLAHFVAVSRPGHEVVDIPNDRISFLEVPAMAISSSNCRERVRSGLPIWYLVPEGVVQYIAKHGLYRSLYG</sequence>
<reference key="1">
    <citation type="journal article" date="2003" name="Genome Res.">
        <title>Tropheryma whipplei twist: a human pathogenic Actinobacteria with a reduced genome.</title>
        <authorList>
            <person name="Raoult D."/>
            <person name="Ogata H."/>
            <person name="Audic S."/>
            <person name="Robert C."/>
            <person name="Suhre K."/>
            <person name="Drancourt M."/>
            <person name="Claverie J.-M."/>
        </authorList>
    </citation>
    <scope>NUCLEOTIDE SEQUENCE [LARGE SCALE GENOMIC DNA]</scope>
    <source>
        <strain>Twist</strain>
    </source>
</reference>
<protein>
    <recommendedName>
        <fullName evidence="1">Probable nicotinate-nucleotide adenylyltransferase</fullName>
        <ecNumber evidence="1">2.7.7.18</ecNumber>
    </recommendedName>
    <alternativeName>
        <fullName evidence="1">Deamido-NAD(+) diphosphorylase</fullName>
    </alternativeName>
    <alternativeName>
        <fullName evidence="1">Deamido-NAD(+) pyrophosphorylase</fullName>
    </alternativeName>
    <alternativeName>
        <fullName evidence="1">Nicotinate mononucleotide adenylyltransferase</fullName>
        <shortName evidence="1">NaMN adenylyltransferase</shortName>
    </alternativeName>
</protein>
<keyword id="KW-0067">ATP-binding</keyword>
<keyword id="KW-0520">NAD</keyword>
<keyword id="KW-0547">Nucleotide-binding</keyword>
<keyword id="KW-0548">Nucleotidyltransferase</keyword>
<keyword id="KW-0662">Pyridine nucleotide biosynthesis</keyword>
<keyword id="KW-1185">Reference proteome</keyword>
<keyword id="KW-0808">Transferase</keyword>
<comment type="function">
    <text evidence="1">Catalyzes the reversible adenylation of nicotinate mononucleotide (NaMN) to nicotinic acid adenine dinucleotide (NaAD).</text>
</comment>
<comment type="catalytic activity">
    <reaction evidence="1">
        <text>nicotinate beta-D-ribonucleotide + ATP + H(+) = deamido-NAD(+) + diphosphate</text>
        <dbReference type="Rhea" id="RHEA:22860"/>
        <dbReference type="ChEBI" id="CHEBI:15378"/>
        <dbReference type="ChEBI" id="CHEBI:30616"/>
        <dbReference type="ChEBI" id="CHEBI:33019"/>
        <dbReference type="ChEBI" id="CHEBI:57502"/>
        <dbReference type="ChEBI" id="CHEBI:58437"/>
        <dbReference type="EC" id="2.7.7.18"/>
    </reaction>
</comment>
<comment type="pathway">
    <text evidence="1">Cofactor biosynthesis; NAD(+) biosynthesis; deamido-NAD(+) from nicotinate D-ribonucleotide: step 1/1.</text>
</comment>
<comment type="similarity">
    <text evidence="1">Belongs to the NadD family.</text>
</comment>
<comment type="sequence caution" evidence="2">
    <conflict type="erroneous initiation">
        <sequence resource="EMBL-CDS" id="AAO44566"/>
    </conflict>
</comment>
<proteinExistence type="inferred from homology"/>
<organism>
    <name type="scientific">Tropheryma whipplei (strain Twist)</name>
    <name type="common">Whipple's bacillus</name>
    <dbReference type="NCBI Taxonomy" id="203267"/>
    <lineage>
        <taxon>Bacteria</taxon>
        <taxon>Bacillati</taxon>
        <taxon>Actinomycetota</taxon>
        <taxon>Actinomycetes</taxon>
        <taxon>Micrococcales</taxon>
        <taxon>Tropherymataceae</taxon>
        <taxon>Tropheryma</taxon>
    </lineage>
</organism>
<name>NADD_TROWT</name>